<protein>
    <recommendedName>
        <fullName>Cytochrome c peroxidase, mitochondrial</fullName>
        <shortName>CCP</shortName>
        <ecNumber evidence="8">1.11.1.5</ecNumber>
    </recommendedName>
</protein>
<proteinExistence type="evidence at protein level"/>
<organism>
    <name type="scientific">Saccharomyces cerevisiae (strain ATCC 204508 / S288c)</name>
    <name type="common">Baker's yeast</name>
    <dbReference type="NCBI Taxonomy" id="559292"/>
    <lineage>
        <taxon>Eukaryota</taxon>
        <taxon>Fungi</taxon>
        <taxon>Dikarya</taxon>
        <taxon>Ascomycota</taxon>
        <taxon>Saccharomycotina</taxon>
        <taxon>Saccharomycetes</taxon>
        <taxon>Saccharomycetales</taxon>
        <taxon>Saccharomycetaceae</taxon>
        <taxon>Saccharomyces</taxon>
    </lineage>
</organism>
<reference key="1">
    <citation type="journal article" date="1982" name="J. Biol. Chem.">
        <title>Nucleotide sequence of the yeast nuclear gene for cytochrome c peroxidase precursor. Functional implications of the pre sequence for protein transport into mitochondria.</title>
        <authorList>
            <person name="Kaput J."/>
            <person name="Goltz S."/>
            <person name="Blobel G."/>
        </authorList>
    </citation>
    <scope>NUCLEOTIDE SEQUENCE [GENOMIC DNA]</scope>
</reference>
<reference key="2">
    <citation type="submission" date="1991-10" db="EMBL/GenBank/DDBJ databases">
        <title>Isolation and sequence analysis of a second allele of the yeast nuclear gene cytochrome C peroxidase.</title>
        <authorList>
            <person name="Piattoni M."/>
            <person name="Miyazaki W."/>
            <person name="Jayaraman K."/>
            <person name="Kaput J."/>
        </authorList>
    </citation>
    <scope>NUCLEOTIDE SEQUENCE [GENOMIC DNA]</scope>
    <source>
        <strain>DBY939</strain>
    </source>
</reference>
<reference key="3">
    <citation type="journal article" date="1994" name="Nature">
        <title>Complete DNA sequence of yeast chromosome XI.</title>
        <authorList>
            <person name="Dujon B."/>
            <person name="Alexandraki D."/>
            <person name="Andre B."/>
            <person name="Ansorge W."/>
            <person name="Baladron V."/>
            <person name="Ballesta J.P.G."/>
            <person name="Banrevi A."/>
            <person name="Bolle P.-A."/>
            <person name="Bolotin-Fukuhara M."/>
            <person name="Bossier P."/>
            <person name="Bou G."/>
            <person name="Boyer J."/>
            <person name="Buitrago M.J."/>
            <person name="Cheret G."/>
            <person name="Colleaux L."/>
            <person name="Daignan-Fornier B."/>
            <person name="del Rey F."/>
            <person name="Dion C."/>
            <person name="Domdey H."/>
            <person name="Duesterhoeft A."/>
            <person name="Duesterhus S."/>
            <person name="Entian K.-D."/>
            <person name="Erfle H."/>
            <person name="Esteban P.F."/>
            <person name="Feldmann H."/>
            <person name="Fernandes L."/>
            <person name="Fobo G.M."/>
            <person name="Fritz C."/>
            <person name="Fukuhara H."/>
            <person name="Gabel C."/>
            <person name="Gaillon L."/>
            <person name="Garcia-Cantalejo J.M."/>
            <person name="Garcia-Ramirez J.J."/>
            <person name="Gent M.E."/>
            <person name="Ghazvini M."/>
            <person name="Goffeau A."/>
            <person name="Gonzalez A."/>
            <person name="Grothues D."/>
            <person name="Guerreiro P."/>
            <person name="Hegemann J.H."/>
            <person name="Hewitt N."/>
            <person name="Hilger F."/>
            <person name="Hollenberg C.P."/>
            <person name="Horaitis O."/>
            <person name="Indge K.J."/>
            <person name="Jacquier A."/>
            <person name="James C.M."/>
            <person name="Jauniaux J.-C."/>
            <person name="Jimenez A."/>
            <person name="Keuchel H."/>
            <person name="Kirchrath L."/>
            <person name="Kleine K."/>
            <person name="Koetter P."/>
            <person name="Legrain P."/>
            <person name="Liebl S."/>
            <person name="Louis E.J."/>
            <person name="Maia e Silva A."/>
            <person name="Marck C."/>
            <person name="Monnier A.-L."/>
            <person name="Moestl D."/>
            <person name="Mueller S."/>
            <person name="Obermaier B."/>
            <person name="Oliver S.G."/>
            <person name="Pallier C."/>
            <person name="Pascolo S."/>
            <person name="Pfeiffer F."/>
            <person name="Philippsen P."/>
            <person name="Planta R.J."/>
            <person name="Pohl F.M."/>
            <person name="Pohl T.M."/>
            <person name="Poehlmann R."/>
            <person name="Portetelle D."/>
            <person name="Purnelle B."/>
            <person name="Puzos V."/>
            <person name="Ramezani Rad M."/>
            <person name="Rasmussen S.W."/>
            <person name="Remacha M.A."/>
            <person name="Revuelta J.L."/>
            <person name="Richard G.-F."/>
            <person name="Rieger M."/>
            <person name="Rodrigues-Pousada C."/>
            <person name="Rose M."/>
            <person name="Rupp T."/>
            <person name="Santos M.A."/>
            <person name="Schwager C."/>
            <person name="Sensen C."/>
            <person name="Skala J."/>
            <person name="Soares H."/>
            <person name="Sor F."/>
            <person name="Stegemann J."/>
            <person name="Tettelin H."/>
            <person name="Thierry A."/>
            <person name="Tzermia M."/>
            <person name="Urrestarazu L.A."/>
            <person name="van Dyck L."/>
            <person name="van Vliet-Reedijk J.C."/>
            <person name="Valens M."/>
            <person name="Vandenbol M."/>
            <person name="Vilela C."/>
            <person name="Vissers S."/>
            <person name="von Wettstein D."/>
            <person name="Voss H."/>
            <person name="Wiemann S."/>
            <person name="Xu G."/>
            <person name="Zimmermann J."/>
            <person name="Haasemann M."/>
            <person name="Becker I."/>
            <person name="Mewes H.-W."/>
        </authorList>
    </citation>
    <scope>NUCLEOTIDE SEQUENCE [LARGE SCALE GENOMIC DNA]</scope>
    <source>
        <strain>ATCC 204508 / S288c</strain>
    </source>
</reference>
<reference key="4">
    <citation type="journal article" date="2014" name="G3 (Bethesda)">
        <title>The reference genome sequence of Saccharomyces cerevisiae: Then and now.</title>
        <authorList>
            <person name="Engel S.R."/>
            <person name="Dietrich F.S."/>
            <person name="Fisk D.G."/>
            <person name="Binkley G."/>
            <person name="Balakrishnan R."/>
            <person name="Costanzo M.C."/>
            <person name="Dwight S.S."/>
            <person name="Hitz B.C."/>
            <person name="Karra K."/>
            <person name="Nash R.S."/>
            <person name="Weng S."/>
            <person name="Wong E.D."/>
            <person name="Lloyd P."/>
            <person name="Skrzypek M.S."/>
            <person name="Miyasato S.R."/>
            <person name="Simison M."/>
            <person name="Cherry J.M."/>
        </authorList>
    </citation>
    <scope>GENOME REANNOTATION</scope>
    <source>
        <strain>ATCC 204508 / S288c</strain>
    </source>
</reference>
<reference key="5">
    <citation type="journal article" date="2007" name="Genome Res.">
        <title>Approaching a complete repository of sequence-verified protein-encoding clones for Saccharomyces cerevisiae.</title>
        <authorList>
            <person name="Hu Y."/>
            <person name="Rolfs A."/>
            <person name="Bhullar B."/>
            <person name="Murthy T.V.S."/>
            <person name="Zhu C."/>
            <person name="Berger M.F."/>
            <person name="Camargo A.A."/>
            <person name="Kelley F."/>
            <person name="McCarron S."/>
            <person name="Jepson D."/>
            <person name="Richardson A."/>
            <person name="Raphael J."/>
            <person name="Moreira D."/>
            <person name="Taycher E."/>
            <person name="Zuo D."/>
            <person name="Mohr S."/>
            <person name="Kane M.F."/>
            <person name="Williamson J."/>
            <person name="Simpson A.J.G."/>
            <person name="Bulyk M.L."/>
            <person name="Harlow E."/>
            <person name="Marsischky G."/>
            <person name="Kolodner R.D."/>
            <person name="LaBaer J."/>
        </authorList>
    </citation>
    <scope>NUCLEOTIDE SEQUENCE [GENOMIC DNA]</scope>
    <source>
        <strain>ATCC 204508 / S288c</strain>
    </source>
</reference>
<reference key="6">
    <citation type="journal article" date="1980" name="Arch. Biochem. Biophys.">
        <title>Primary structure of yeast cytochrome c peroxidase. II. The complete amino acid sequence.</title>
        <authorList>
            <person name="Takio K."/>
            <person name="Titani K."/>
            <person name="Ericsson L.H."/>
            <person name="Yonetani T."/>
        </authorList>
    </citation>
    <scope>PROTEIN SEQUENCE OF 68-361</scope>
</reference>
<reference key="7">
    <citation type="journal article" date="1982" name="J. Biol. Chem.">
        <title>Isolation of the yeast nuclear gene encoding the mitochondrial protein, cytochrome c peroxidase.</title>
        <authorList>
            <person name="Goltz S."/>
            <person name="Kaput J."/>
            <person name="Blobel G."/>
        </authorList>
    </citation>
    <scope>NUCLEOTIDE SEQUENCE [GENOMIC DNA] OF 253-332</scope>
</reference>
<reference key="8">
    <citation type="journal article" date="1988" name="Biochemistry">
        <title>Tryptophan-191--&gt;phenylalanine, a proximal-side mutation in yeast cytochrome c peroxidase that strongly affects the kinetics of ferrocytochrome c oxidation.</title>
        <authorList>
            <person name="Mauro J.M."/>
            <person name="Fishel L.A."/>
            <person name="Hazzard J.T."/>
            <person name="Meyer T.E."/>
            <person name="Tollin G."/>
            <person name="Cusanovich M.A."/>
            <person name="Kraut J."/>
        </authorList>
    </citation>
    <scope>FUNCTION</scope>
    <scope>CATALYTIC ACTIVITY</scope>
    <scope>IDENTIFICATION IN A COMPLEX WITH CYTOCHROME C</scope>
    <scope>MUTAGENESIS OF TRP-258</scope>
</reference>
<reference key="9">
    <citation type="journal article" date="2003" name="Nature">
        <title>Mitochondrial membrane remodelling regulated by a conserved rhomboid protease.</title>
        <authorList>
            <person name="McQuibban G.A."/>
            <person name="Saurya S."/>
            <person name="Freeman M."/>
        </authorList>
    </citation>
    <scope>PROTEOLYTIC CLEAVAGE</scope>
</reference>
<reference key="10">
    <citation type="journal article" date="2003" name="Nature">
        <title>Global analysis of protein expression in yeast.</title>
        <authorList>
            <person name="Ghaemmaghami S."/>
            <person name="Huh W.-K."/>
            <person name="Bower K."/>
            <person name="Howson R.W."/>
            <person name="Belle A."/>
            <person name="Dephoure N."/>
            <person name="O'Shea E.K."/>
            <person name="Weissman J.S."/>
        </authorList>
    </citation>
    <scope>LEVEL OF PROTEIN EXPRESSION [LARGE SCALE ANALYSIS]</scope>
</reference>
<reference key="11">
    <citation type="journal article" date="2007" name="EMBO J.">
        <title>m-AAA protease-driven membrane dislocation allows intramembrane cleavage by rhomboid in mitochondria.</title>
        <authorList>
            <person name="Tatsuta T."/>
            <person name="Augustin S."/>
            <person name="Nolden M."/>
            <person name="Friedrichs B."/>
            <person name="Langer T."/>
        </authorList>
    </citation>
    <scope>PROTEOLYTIC CLEAVAGE</scope>
</reference>
<reference key="12">
    <citation type="journal article" date="2008" name="Mol. Cell. Proteomics">
        <title>A multidimensional chromatography technology for in-depth phosphoproteome analysis.</title>
        <authorList>
            <person name="Albuquerque C.P."/>
            <person name="Smolka M.B."/>
            <person name="Payne S.H."/>
            <person name="Bafna V."/>
            <person name="Eng J."/>
            <person name="Zhou H."/>
        </authorList>
    </citation>
    <scope>PHOSPHORYLATION [LARGE SCALE ANALYSIS] AT TYR-220</scope>
    <scope>IDENTIFICATION BY MASS SPECTROMETRY [LARGE SCALE ANALYSIS]</scope>
</reference>
<reference key="13">
    <citation type="journal article" date="2012" name="Mol. Cell. Proteomics">
        <title>Intermembrane space proteome of yeast mitochondria.</title>
        <authorList>
            <person name="Voegtle F.N."/>
            <person name="Burkhart J.M."/>
            <person name="Rao S."/>
            <person name="Gerbeth C."/>
            <person name="Hinrichs J."/>
            <person name="Martinou J.C."/>
            <person name="Chacinska A."/>
            <person name="Sickmann A."/>
            <person name="Zahedi R.P."/>
            <person name="Meisinger C."/>
        </authorList>
    </citation>
    <scope>IDENTIFICATION BY MASS SPECTROMETRY</scope>
    <scope>SUBCELLULAR LOCATION [LARGE SCALE ANALYSIS]</scope>
</reference>
<reference key="14">
    <citation type="journal article" date="1984" name="J. Biol. Chem.">
        <title>Crystal structure of yeast cytochrome c peroxidase refined at 1.7-A resolution.</title>
        <authorList>
            <person name="Finzel B.C."/>
            <person name="Poulos T.L."/>
            <person name="Kraut J."/>
        </authorList>
    </citation>
    <scope>X-RAY CRYSTALLOGRAPHY (1.7 ANGSTROMS) IN COMPLEX WITH HEME</scope>
</reference>
<reference key="15">
    <citation type="journal article" date="1990" name="Biochemistry">
        <title>X-ray structures of recombinant yeast cytochrome c peroxidase and three heme-cleft mutants prepared by site-directed mutagenesis.</title>
        <authorList>
            <person name="Wang J.M."/>
            <person name="Mauro M."/>
            <person name="Edwards S.L."/>
            <person name="Oatley S.J."/>
            <person name="Fishel L.A."/>
            <person name="Ashford V.A."/>
            <person name="Xuong N.-H."/>
            <person name="Kraut J."/>
        </authorList>
    </citation>
    <scope>X-RAY CRYSTALLOGRAPHY (2.2 ANGSTROMS) OF MUTANTS IN COMPLEX WITH HEME</scope>
</reference>
<reference key="16">
    <citation type="journal article" date="1993" name="Biochemistry">
        <title>The Asp-His-Fe triad of cytochrome c peroxidase controls the reduction potential, electronic structure, and coupling of the tryptophan free radical to the heme.</title>
        <authorList>
            <person name="Goodin D.B."/>
            <person name="McRee D.E."/>
        </authorList>
    </citation>
    <scope>X-RAY CRYSTALLOGRAPHY (2.1 ANGSTROMS) IN COMPLEX WITH HEME</scope>
</reference>
<reference key="17">
    <citation type="journal article" date="1996" name="Nat. Struct. Biol.">
        <title>A ligand-gated, hinged loop rearrangement opens a channel to a buried artificial protein cavity.</title>
        <authorList>
            <person name="Fitzgerald M.M."/>
            <person name="Musah R.A."/>
            <person name="McRee D.E."/>
            <person name="Goodin D.B."/>
        </authorList>
    </citation>
    <scope>X-RAY CRYSTALLOGRAPHY (2.1 ANGSTROMS) IN COMPLEX WITH HEME</scope>
</reference>
<reference key="18">
    <citation type="journal article" date="2000" name="J. Biol. Chem.">
        <title>Unusual oxidative chemistry of N(omega)-hydroxyarginine and N-hydroxyguanidine catalyzed at an engineered cavity in a heme peroxidase.</title>
        <authorList>
            <person name="Hirst J."/>
            <person name="Goodin D.B."/>
        </authorList>
    </citation>
    <scope>X-RAY CRYSTALLOGRAPHY (1.93 ANGSTROMS) IN COMPLEX WITH HEME</scope>
</reference>
<reference key="19">
    <citation type="journal article" date="2001" name="Biochemistry">
        <title>Replacement of the axial histidine ligand with imidazole in cytochrome c peroxidase. 1. Effects on structure.</title>
        <authorList>
            <person name="Hirst J."/>
            <person name="Wilcox S.K."/>
            <person name="Williams P.A."/>
            <person name="Blankenship J."/>
            <person name="McRee D.E."/>
            <person name="Goodin D.B."/>
        </authorList>
    </citation>
    <scope>X-RAY CRYSTALLOGRAPHY (2.56 ANGSTROMS) IN COMPLEX WITH HEME</scope>
</reference>
<name>CCPR_YEAST</name>
<feature type="transit peptide" description="Mitochondrion" evidence="10">
    <location>
        <begin position="1"/>
        <end position="67"/>
    </location>
</feature>
<feature type="chain" id="PRO_0000023634" description="Cytochrome c peroxidase, mitochondrial">
    <location>
        <begin position="68"/>
        <end position="361"/>
    </location>
</feature>
<feature type="active site" description="Proton acceptor">
    <location>
        <position position="119"/>
    </location>
</feature>
<feature type="active site" description="Tryptophan radical intermediate" evidence="8">
    <location>
        <position position="258"/>
    </location>
</feature>
<feature type="binding site" description="axial binding residue" evidence="1 2 6 9 11 12">
    <location>
        <position position="242"/>
    </location>
    <ligand>
        <name>heme b</name>
        <dbReference type="ChEBI" id="CHEBI:60344"/>
    </ligand>
    <ligandPart>
        <name>Fe</name>
        <dbReference type="ChEBI" id="CHEBI:18248"/>
    </ligandPart>
</feature>
<feature type="site" description="Transition state stabilizer">
    <location>
        <position position="115"/>
    </location>
</feature>
<feature type="modified residue" description="Phosphotyrosine" evidence="14">
    <location>
        <position position="220"/>
    </location>
</feature>
<feature type="sequence variant" description="In allele 2.">
    <original>A</original>
    <variation>AA</variation>
    <location>
        <position position="33"/>
    </location>
</feature>
<feature type="sequence variant" description="In allele 2.">
    <original>T</original>
    <variation>I</variation>
    <location>
        <position position="120"/>
    </location>
</feature>
<feature type="sequence variant" description="In allele 2.">
    <original>D</original>
    <variation>G</variation>
    <location>
        <position position="219"/>
    </location>
</feature>
<feature type="mutagenesis site" description="Substantially diminished activity." evidence="8">
    <original>W</original>
    <variation>F</variation>
    <location>
        <position position="258"/>
    </location>
</feature>
<feature type="sequence conflict" description="In Ref. 3; AAA88709." evidence="13" ref="3">
    <original>Q</original>
    <variation>H</variation>
    <location>
        <position position="41"/>
    </location>
</feature>
<feature type="sequence conflict" description="In Ref. 3; AAA88709." evidence="13" ref="3">
    <original>A</original>
    <variation>P</variation>
    <location>
        <position position="62"/>
    </location>
</feature>
<feature type="sequence conflict" description="In Ref. 6; AA sequence." evidence="13" ref="6">
    <original>ND</original>
    <variation>DN</variation>
    <location>
        <begin position="145"/>
        <end position="146"/>
    </location>
</feature>
<feature type="sequence conflict" description="In Ref. 6; AA sequence." evidence="13" ref="6">
    <location>
        <position position="231"/>
    </location>
</feature>
<feature type="sequence conflict" description="In Ref. 5; AAS56247." evidence="13" ref="5">
    <original>L</original>
    <variation>M</variation>
    <location>
        <position position="273"/>
    </location>
</feature>
<feature type="helix" evidence="21">
    <location>
        <begin position="83"/>
        <end position="99"/>
    </location>
</feature>
<feature type="turn" evidence="19">
    <location>
        <begin position="100"/>
        <end position="102"/>
    </location>
</feature>
<feature type="helix" evidence="21">
    <location>
        <begin position="103"/>
        <end position="106"/>
    </location>
</feature>
<feature type="helix" evidence="21">
    <location>
        <begin position="110"/>
        <end position="121"/>
    </location>
</feature>
<feature type="turn" evidence="21">
    <location>
        <begin position="126"/>
        <end position="128"/>
    </location>
</feature>
<feature type="strand" evidence="21">
    <location>
        <begin position="131"/>
        <end position="133"/>
    </location>
</feature>
<feature type="helix" evidence="21">
    <location>
        <begin position="137"/>
        <end position="139"/>
    </location>
</feature>
<feature type="helix" evidence="21">
    <location>
        <begin position="141"/>
        <end position="144"/>
    </location>
</feature>
<feature type="helix" evidence="21">
    <location>
        <begin position="147"/>
        <end position="149"/>
    </location>
</feature>
<feature type="turn" evidence="21">
    <location>
        <begin position="150"/>
        <end position="152"/>
    </location>
</feature>
<feature type="helix" evidence="21">
    <location>
        <begin position="153"/>
        <end position="165"/>
    </location>
</feature>
<feature type="strand" evidence="17">
    <location>
        <begin position="167"/>
        <end position="169"/>
    </location>
</feature>
<feature type="helix" evidence="21">
    <location>
        <begin position="171"/>
        <end position="185"/>
    </location>
</feature>
<feature type="helix" evidence="21">
    <location>
        <begin position="202"/>
        <end position="204"/>
    </location>
</feature>
<feature type="turn" evidence="16">
    <location>
        <begin position="208"/>
        <end position="210"/>
    </location>
</feature>
<feature type="helix" evidence="21">
    <location>
        <begin position="218"/>
        <end position="226"/>
    </location>
</feature>
<feature type="turn" evidence="21">
    <location>
        <begin position="227"/>
        <end position="229"/>
    </location>
</feature>
<feature type="helix" evidence="21">
    <location>
        <begin position="232"/>
        <end position="239"/>
    </location>
</feature>
<feature type="helix" evidence="21">
    <location>
        <begin position="240"/>
        <end position="243"/>
    </location>
</feature>
<feature type="strand" evidence="21">
    <location>
        <begin position="244"/>
        <end position="247"/>
    </location>
</feature>
<feature type="helix" evidence="21">
    <location>
        <begin position="249"/>
        <end position="252"/>
    </location>
</feature>
<feature type="strand" evidence="21">
    <location>
        <begin position="256"/>
        <end position="260"/>
    </location>
</feature>
<feature type="strand" evidence="22">
    <location>
        <begin position="262"/>
        <end position="264"/>
    </location>
</feature>
<feature type="helix" evidence="21">
    <location>
        <begin position="268"/>
        <end position="275"/>
    </location>
</feature>
<feature type="strand" evidence="21">
    <location>
        <begin position="278"/>
        <end position="282"/>
    </location>
</feature>
<feature type="strand" evidence="20">
    <location>
        <begin position="284"/>
        <end position="286"/>
    </location>
</feature>
<feature type="strand" evidence="21">
    <location>
        <begin position="288"/>
        <end position="292"/>
    </location>
</feature>
<feature type="turn" evidence="15">
    <location>
        <begin position="293"/>
        <end position="295"/>
    </location>
</feature>
<feature type="strand" evidence="15">
    <location>
        <begin position="296"/>
        <end position="298"/>
    </location>
</feature>
<feature type="helix" evidence="21">
    <location>
        <begin position="300"/>
        <end position="307"/>
    </location>
</feature>
<feature type="helix" evidence="21">
    <location>
        <begin position="309"/>
        <end position="319"/>
    </location>
</feature>
<feature type="helix" evidence="21">
    <location>
        <begin position="322"/>
        <end position="338"/>
    </location>
</feature>
<feature type="strand" evidence="18">
    <location>
        <begin position="345"/>
        <end position="347"/>
    </location>
</feature>
<feature type="helix" evidence="21">
    <location>
        <begin position="356"/>
        <end position="359"/>
    </location>
</feature>
<gene>
    <name type="primary">CCP1</name>
    <name type="synonym">CCP</name>
    <name type="synonym">CPO</name>
    <name type="ordered locus">YKR066C</name>
</gene>
<keyword id="KW-0002">3D-structure</keyword>
<keyword id="KW-0903">Direct protein sequencing</keyword>
<keyword id="KW-0349">Heme</keyword>
<keyword id="KW-0376">Hydrogen peroxide</keyword>
<keyword id="KW-0408">Iron</keyword>
<keyword id="KW-0479">Metal-binding</keyword>
<keyword id="KW-0496">Mitochondrion</keyword>
<keyword id="KW-0556">Organic radical</keyword>
<keyword id="KW-0560">Oxidoreductase</keyword>
<keyword id="KW-0575">Peroxidase</keyword>
<keyword id="KW-0597">Phosphoprotein</keyword>
<keyword id="KW-1185">Reference proteome</keyword>
<keyword id="KW-0809">Transit peptide</keyword>
<dbReference type="EC" id="1.11.1.5" evidence="8"/>
<dbReference type="EMBL" id="J01468">
    <property type="protein sequence ID" value="AAA88709.1"/>
    <property type="molecule type" value="Genomic_DNA"/>
</dbReference>
<dbReference type="EMBL" id="X62422">
    <property type="protein sequence ID" value="CAA44288.1"/>
    <property type="molecule type" value="Genomic_DNA"/>
</dbReference>
<dbReference type="EMBL" id="Z28291">
    <property type="protein sequence ID" value="CAA82145.1"/>
    <property type="molecule type" value="Genomic_DNA"/>
</dbReference>
<dbReference type="EMBL" id="AY557921">
    <property type="protein sequence ID" value="AAS56247.1"/>
    <property type="molecule type" value="Genomic_DNA"/>
</dbReference>
<dbReference type="EMBL" id="J01321">
    <property type="protein sequence ID" value="AAA88710.1"/>
    <property type="molecule type" value="Genomic_DNA"/>
</dbReference>
<dbReference type="EMBL" id="BK006944">
    <property type="protein sequence ID" value="DAA09217.1"/>
    <property type="molecule type" value="Genomic_DNA"/>
</dbReference>
<dbReference type="PIR" id="S19064">
    <property type="entry name" value="OPBYC"/>
</dbReference>
<dbReference type="RefSeq" id="NP_012992.1">
    <property type="nucleotide sequence ID" value="NM_001179856.1"/>
</dbReference>
<dbReference type="PDB" id="1A2F">
    <property type="method" value="X-ray"/>
    <property type="resolution" value="2.10 A"/>
    <property type="chains" value="A=71-361"/>
</dbReference>
<dbReference type="PDB" id="1A2G">
    <property type="method" value="X-ray"/>
    <property type="resolution" value="2.10 A"/>
    <property type="chains" value="A=71-361"/>
</dbReference>
<dbReference type="PDB" id="1AA4">
    <property type="method" value="X-ray"/>
    <property type="resolution" value="2.10 A"/>
    <property type="chains" value="A=71-361"/>
</dbReference>
<dbReference type="PDB" id="1AC4">
    <property type="method" value="X-ray"/>
    <property type="resolution" value="2.10 A"/>
    <property type="chains" value="A=71-361"/>
</dbReference>
<dbReference type="PDB" id="1AC8">
    <property type="method" value="X-ray"/>
    <property type="resolution" value="2.10 A"/>
    <property type="chains" value="A=71-361"/>
</dbReference>
<dbReference type="PDB" id="1AEB">
    <property type="method" value="X-ray"/>
    <property type="resolution" value="2.10 A"/>
    <property type="chains" value="A=71-361"/>
</dbReference>
<dbReference type="PDB" id="1AED">
    <property type="method" value="X-ray"/>
    <property type="resolution" value="2.10 A"/>
    <property type="chains" value="A=71-361"/>
</dbReference>
<dbReference type="PDB" id="1AEE">
    <property type="method" value="X-ray"/>
    <property type="resolution" value="2.10 A"/>
    <property type="chains" value="A=71-361"/>
</dbReference>
<dbReference type="PDB" id="1AEF">
    <property type="method" value="X-ray"/>
    <property type="resolution" value="2.10 A"/>
    <property type="chains" value="A=71-361"/>
</dbReference>
<dbReference type="PDB" id="1AEG">
    <property type="method" value="X-ray"/>
    <property type="resolution" value="2.10 A"/>
    <property type="chains" value="A=71-361"/>
</dbReference>
<dbReference type="PDB" id="1AEH">
    <property type="method" value="X-ray"/>
    <property type="resolution" value="2.10 A"/>
    <property type="chains" value="A=71-361"/>
</dbReference>
<dbReference type="PDB" id="1AEJ">
    <property type="method" value="X-ray"/>
    <property type="resolution" value="2.10 A"/>
    <property type="chains" value="A=71-361"/>
</dbReference>
<dbReference type="PDB" id="1AEK">
    <property type="method" value="X-ray"/>
    <property type="resolution" value="2.10 A"/>
    <property type="chains" value="A=71-361"/>
</dbReference>
<dbReference type="PDB" id="1AEM">
    <property type="method" value="X-ray"/>
    <property type="resolution" value="2.10 A"/>
    <property type="chains" value="A=71-361"/>
</dbReference>
<dbReference type="PDB" id="1AEN">
    <property type="method" value="X-ray"/>
    <property type="resolution" value="2.10 A"/>
    <property type="chains" value="A=71-361"/>
</dbReference>
<dbReference type="PDB" id="1AEO">
    <property type="method" value="X-ray"/>
    <property type="resolution" value="2.10 A"/>
    <property type="chains" value="A=71-361"/>
</dbReference>
<dbReference type="PDB" id="1AEQ">
    <property type="method" value="X-ray"/>
    <property type="resolution" value="2.10 A"/>
    <property type="chains" value="A=71-361"/>
</dbReference>
<dbReference type="PDB" id="1AES">
    <property type="method" value="X-ray"/>
    <property type="resolution" value="2.10 A"/>
    <property type="chains" value="A=71-361"/>
</dbReference>
<dbReference type="PDB" id="1AET">
    <property type="method" value="X-ray"/>
    <property type="resolution" value="2.10 A"/>
    <property type="chains" value="A=71-361"/>
</dbReference>
<dbReference type="PDB" id="1AEU">
    <property type="method" value="X-ray"/>
    <property type="resolution" value="2.10 A"/>
    <property type="chains" value="A=71-361"/>
</dbReference>
<dbReference type="PDB" id="1AEV">
    <property type="method" value="X-ray"/>
    <property type="resolution" value="2.10 A"/>
    <property type="chains" value="A=71-361"/>
</dbReference>
<dbReference type="PDB" id="1BEJ">
    <property type="method" value="X-ray"/>
    <property type="resolution" value="2.40 A"/>
    <property type="chains" value="A=71-361"/>
</dbReference>
<dbReference type="PDB" id="1BEK">
    <property type="method" value="X-ray"/>
    <property type="resolution" value="2.20 A"/>
    <property type="chains" value="A=71-361"/>
</dbReference>
<dbReference type="PDB" id="1BEM">
    <property type="method" value="X-ray"/>
    <property type="resolution" value="2.20 A"/>
    <property type="chains" value="A=71-361"/>
</dbReference>
<dbReference type="PDB" id="1BEP">
    <property type="method" value="X-ray"/>
    <property type="resolution" value="2.20 A"/>
    <property type="chains" value="A=71-361"/>
</dbReference>
<dbReference type="PDB" id="1BEQ">
    <property type="method" value="X-ray"/>
    <property type="resolution" value="2.16 A"/>
    <property type="chains" value="A=71-361"/>
</dbReference>
<dbReference type="PDB" id="1BES">
    <property type="method" value="X-ray"/>
    <property type="resolution" value="2.00 A"/>
    <property type="chains" value="A=71-361"/>
</dbReference>
<dbReference type="PDB" id="1BJ9">
    <property type="method" value="X-ray"/>
    <property type="resolution" value="2.20 A"/>
    <property type="chains" value="A=71-361"/>
</dbReference>
<dbReference type="PDB" id="1BVA">
    <property type="method" value="X-ray"/>
    <property type="resolution" value="1.89 A"/>
    <property type="chains" value="A=71-361"/>
</dbReference>
<dbReference type="PDB" id="1CCA">
    <property type="method" value="X-ray"/>
    <property type="resolution" value="1.80 A"/>
    <property type="chains" value="A=68-361"/>
</dbReference>
<dbReference type="PDB" id="1CCB">
    <property type="method" value="X-ray"/>
    <property type="resolution" value="2.10 A"/>
    <property type="chains" value="A=68-361"/>
</dbReference>
<dbReference type="PDB" id="1CCC">
    <property type="method" value="X-ray"/>
    <property type="resolution" value="2.00 A"/>
    <property type="chains" value="A=68-361"/>
</dbReference>
<dbReference type="PDB" id="1CCE">
    <property type="method" value="X-ray"/>
    <property type="resolution" value="2.30 A"/>
    <property type="chains" value="A=71-361"/>
</dbReference>
<dbReference type="PDB" id="1CCG">
    <property type="method" value="X-ray"/>
    <property type="resolution" value="2.10 A"/>
    <property type="chains" value="A=71-361"/>
</dbReference>
<dbReference type="PDB" id="1CCI">
    <property type="method" value="X-ray"/>
    <property type="resolution" value="2.40 A"/>
    <property type="chains" value="A=71-361"/>
</dbReference>
<dbReference type="PDB" id="1CCJ">
    <property type="method" value="X-ray"/>
    <property type="resolution" value="2.10 A"/>
    <property type="chains" value="A=71-361"/>
</dbReference>
<dbReference type="PDB" id="1CCK">
    <property type="method" value="X-ray"/>
    <property type="resolution" value="2.10 A"/>
    <property type="chains" value="A=71-361"/>
</dbReference>
<dbReference type="PDB" id="1CCL">
    <property type="method" value="X-ray"/>
    <property type="resolution" value="2.00 A"/>
    <property type="chains" value="A=71-361"/>
</dbReference>
<dbReference type="PDB" id="1CCP">
    <property type="method" value="X-ray"/>
    <property type="resolution" value="2.20 A"/>
    <property type="chains" value="A=68-361"/>
</dbReference>
<dbReference type="PDB" id="1CMP">
    <property type="method" value="X-ray"/>
    <property type="resolution" value="1.90 A"/>
    <property type="chains" value="A=71-361"/>
</dbReference>
<dbReference type="PDB" id="1CMQ">
    <property type="method" value="X-ray"/>
    <property type="resolution" value="2.30 A"/>
    <property type="chains" value="A=71-361"/>
</dbReference>
<dbReference type="PDB" id="1CMT">
    <property type="method" value="X-ray"/>
    <property type="resolution" value="2.10 A"/>
    <property type="chains" value="A=71-361"/>
</dbReference>
<dbReference type="PDB" id="1CMU">
    <property type="method" value="X-ray"/>
    <property type="resolution" value="2.10 A"/>
    <property type="chains" value="A=71-361"/>
</dbReference>
<dbReference type="PDB" id="1CPD">
    <property type="method" value="X-ray"/>
    <property type="resolution" value="2.20 A"/>
    <property type="chains" value="A=68-361"/>
</dbReference>
<dbReference type="PDB" id="1CPE">
    <property type="method" value="X-ray"/>
    <property type="resolution" value="2.20 A"/>
    <property type="chains" value="A=68-361"/>
</dbReference>
<dbReference type="PDB" id="1CPF">
    <property type="method" value="X-ray"/>
    <property type="resolution" value="2.20 A"/>
    <property type="chains" value="A=68-361"/>
</dbReference>
<dbReference type="PDB" id="1CPG">
    <property type="method" value="X-ray"/>
    <property type="resolution" value="2.20 A"/>
    <property type="chains" value="A=71-361"/>
</dbReference>
<dbReference type="PDB" id="1CYF">
    <property type="method" value="X-ray"/>
    <property type="resolution" value="2.35 A"/>
    <property type="chains" value="A=68-361"/>
</dbReference>
<dbReference type="PDB" id="1DCC">
    <property type="method" value="X-ray"/>
    <property type="resolution" value="2.20 A"/>
    <property type="chains" value="A=68-361"/>
</dbReference>
<dbReference type="PDB" id="1DJ1">
    <property type="method" value="X-ray"/>
    <property type="resolution" value="1.93 A"/>
    <property type="chains" value="A=71-361"/>
</dbReference>
<dbReference type="PDB" id="1DJ5">
    <property type="method" value="X-ray"/>
    <property type="resolution" value="1.93 A"/>
    <property type="chains" value="A=71-361"/>
</dbReference>
<dbReference type="PDB" id="1DS4">
    <property type="method" value="X-ray"/>
    <property type="resolution" value="2.02 A"/>
    <property type="chains" value="A=71-361"/>
</dbReference>
<dbReference type="PDB" id="1DSE">
    <property type="method" value="X-ray"/>
    <property type="resolution" value="2.00 A"/>
    <property type="chains" value="A=71-361"/>
</dbReference>
<dbReference type="PDB" id="1DSG">
    <property type="method" value="X-ray"/>
    <property type="resolution" value="2.56 A"/>
    <property type="chains" value="A=71-361"/>
</dbReference>
<dbReference type="PDB" id="1DSO">
    <property type="method" value="X-ray"/>
    <property type="resolution" value="2.03 A"/>
    <property type="chains" value="A=71-361"/>
</dbReference>
<dbReference type="PDB" id="1DSP">
    <property type="method" value="X-ray"/>
    <property type="resolution" value="2.03 A"/>
    <property type="chains" value="A=71-361"/>
</dbReference>
<dbReference type="PDB" id="1EBE">
    <property type="method" value="X-ray"/>
    <property type="resolution" value="2.20 A"/>
    <property type="chains" value="A=68-361"/>
</dbReference>
<dbReference type="PDB" id="1JCI">
    <property type="method" value="X-ray"/>
    <property type="resolution" value="1.90 A"/>
    <property type="chains" value="A=68-361"/>
</dbReference>
<dbReference type="PDB" id="1JDR">
    <property type="method" value="X-ray"/>
    <property type="resolution" value="1.50 A"/>
    <property type="chains" value="A=68-361"/>
</dbReference>
<dbReference type="PDB" id="1KOK">
    <property type="method" value="X-ray"/>
    <property type="resolution" value="1.70 A"/>
    <property type="chains" value="A=68-361"/>
</dbReference>
<dbReference type="PDB" id="1KRJ">
    <property type="method" value="X-ray"/>
    <property type="resolution" value="2.00 A"/>
    <property type="chains" value="A=68-361"/>
</dbReference>
<dbReference type="PDB" id="1KXM">
    <property type="method" value="X-ray"/>
    <property type="resolution" value="1.74 A"/>
    <property type="chains" value="A=71-361"/>
</dbReference>
<dbReference type="PDB" id="1KXN">
    <property type="method" value="X-ray"/>
    <property type="resolution" value="1.80 A"/>
    <property type="chains" value="A=71-361"/>
</dbReference>
<dbReference type="PDB" id="1MK8">
    <property type="method" value="X-ray"/>
    <property type="resolution" value="1.65 A"/>
    <property type="chains" value="A=68-361"/>
</dbReference>
<dbReference type="PDB" id="1MKQ">
    <property type="method" value="X-ray"/>
    <property type="resolution" value="1.64 A"/>
    <property type="chains" value="A=68-361"/>
</dbReference>
<dbReference type="PDB" id="1MKR">
    <property type="method" value="X-ray"/>
    <property type="resolution" value="1.58 A"/>
    <property type="chains" value="A=68-361"/>
</dbReference>
<dbReference type="PDB" id="1ML2">
    <property type="method" value="X-ray"/>
    <property type="resolution" value="1.65 A"/>
    <property type="chains" value="A=68-361"/>
</dbReference>
<dbReference type="PDB" id="1RYC">
    <property type="method" value="X-ray"/>
    <property type="resolution" value="1.80 A"/>
    <property type="chains" value="A=71-361"/>
</dbReference>
<dbReference type="PDB" id="1S6V">
    <property type="method" value="X-ray"/>
    <property type="resolution" value="1.88 A"/>
    <property type="chains" value="A/C=68-361"/>
</dbReference>
<dbReference type="PDB" id="1S73">
    <property type="method" value="X-ray"/>
    <property type="resolution" value="1.53 A"/>
    <property type="chains" value="A=68-361"/>
</dbReference>
<dbReference type="PDB" id="1SBM">
    <property type="method" value="X-ray"/>
    <property type="resolution" value="1.69 A"/>
    <property type="chains" value="A=68-361"/>
</dbReference>
<dbReference type="PDB" id="1SDQ">
    <property type="method" value="X-ray"/>
    <property type="resolution" value="1.69 A"/>
    <property type="chains" value="A=68-361"/>
</dbReference>
<dbReference type="PDB" id="1SOG">
    <property type="method" value="X-ray"/>
    <property type="resolution" value="1.85 A"/>
    <property type="chains" value="A=68-361"/>
</dbReference>
<dbReference type="PDB" id="1STQ">
    <property type="method" value="X-ray"/>
    <property type="resolution" value="1.82 A"/>
    <property type="chains" value="A=68-361"/>
</dbReference>
<dbReference type="PDB" id="1U74">
    <property type="method" value="X-ray"/>
    <property type="resolution" value="2.40 A"/>
    <property type="chains" value="A/C=68-361"/>
</dbReference>
<dbReference type="PDB" id="1U75">
    <property type="method" value="X-ray"/>
    <property type="resolution" value="2.55 A"/>
    <property type="chains" value="A/C=68-361"/>
</dbReference>
<dbReference type="PDB" id="1Z53">
    <property type="method" value="X-ray"/>
    <property type="resolution" value="1.13 A"/>
    <property type="chains" value="A=68-361"/>
</dbReference>
<dbReference type="PDB" id="1ZBY">
    <property type="method" value="X-ray"/>
    <property type="resolution" value="1.20 A"/>
    <property type="chains" value="A=68-361"/>
</dbReference>
<dbReference type="PDB" id="1ZBZ">
    <property type="method" value="X-ray"/>
    <property type="resolution" value="1.29 A"/>
    <property type="chains" value="A=68-361"/>
</dbReference>
<dbReference type="PDB" id="2ANZ">
    <property type="method" value="X-ray"/>
    <property type="resolution" value="1.75 A"/>
    <property type="chains" value="A=71-361"/>
</dbReference>
<dbReference type="PDB" id="2AQD">
    <property type="method" value="X-ray"/>
    <property type="resolution" value="1.35 A"/>
    <property type="chains" value="A=71-361"/>
</dbReference>
<dbReference type="PDB" id="2AS1">
    <property type="method" value="X-ray"/>
    <property type="resolution" value="1.55 A"/>
    <property type="chains" value="A=71-361"/>
</dbReference>
<dbReference type="PDB" id="2AS2">
    <property type="method" value="X-ray"/>
    <property type="resolution" value="1.45 A"/>
    <property type="chains" value="A=71-361"/>
</dbReference>
<dbReference type="PDB" id="2AS3">
    <property type="method" value="X-ray"/>
    <property type="resolution" value="1.40 A"/>
    <property type="chains" value="A=71-361"/>
</dbReference>
<dbReference type="PDB" id="2AS4">
    <property type="method" value="X-ray"/>
    <property type="resolution" value="1.30 A"/>
    <property type="chains" value="A=71-361"/>
</dbReference>
<dbReference type="PDB" id="2AS6">
    <property type="method" value="X-ray"/>
    <property type="resolution" value="1.45 A"/>
    <property type="chains" value="A=71-361"/>
</dbReference>
<dbReference type="PDB" id="2B0Z">
    <property type="method" value="X-ray"/>
    <property type="resolution" value="2.70 A"/>
    <property type="chains" value="A=68-361"/>
</dbReference>
<dbReference type="PDB" id="2B10">
    <property type="method" value="X-ray"/>
    <property type="resolution" value="2.80 A"/>
    <property type="chains" value="A/C=68-361"/>
</dbReference>
<dbReference type="PDB" id="2B11">
    <property type="method" value="X-ray"/>
    <property type="resolution" value="2.30 A"/>
    <property type="chains" value="A/C=68-361"/>
</dbReference>
<dbReference type="PDB" id="2B12">
    <property type="method" value="X-ray"/>
    <property type="resolution" value="3.02 A"/>
    <property type="chains" value="A=68-361"/>
</dbReference>
<dbReference type="PDB" id="2BCN">
    <property type="method" value="X-ray"/>
    <property type="resolution" value="1.70 A"/>
    <property type="chains" value="A/C=68-361"/>
</dbReference>
<dbReference type="PDB" id="2CCP">
    <property type="method" value="X-ray"/>
    <property type="resolution" value="2.20 A"/>
    <property type="chains" value="A=68-361"/>
</dbReference>
<dbReference type="PDB" id="2CEP">
    <property type="method" value="X-ray"/>
    <property type="resolution" value="2.20 A"/>
    <property type="chains" value="A=68-361"/>
</dbReference>
<dbReference type="PDB" id="2CYP">
    <property type="method" value="X-ray"/>
    <property type="resolution" value="1.70 A"/>
    <property type="chains" value="A=68-361"/>
</dbReference>
<dbReference type="PDB" id="2EUN">
    <property type="method" value="X-ray"/>
    <property type="resolution" value="1.70 A"/>
    <property type="chains" value="A=71-361"/>
</dbReference>
<dbReference type="PDB" id="2EUO">
    <property type="method" value="X-ray"/>
    <property type="resolution" value="1.45 A"/>
    <property type="chains" value="A=71-361"/>
</dbReference>
<dbReference type="PDB" id="2EUP">
    <property type="method" value="X-ray"/>
    <property type="resolution" value="1.40 A"/>
    <property type="chains" value="A=71-361"/>
</dbReference>
<dbReference type="PDB" id="2EUQ">
    <property type="method" value="X-ray"/>
    <property type="resolution" value="1.30 A"/>
    <property type="chains" value="A=71-361"/>
</dbReference>
<dbReference type="PDB" id="2EUR">
    <property type="method" value="X-ray"/>
    <property type="resolution" value="1.39 A"/>
    <property type="chains" value="A=71-361"/>
</dbReference>
<dbReference type="PDB" id="2EUS">
    <property type="method" value="X-ray"/>
    <property type="resolution" value="1.55 A"/>
    <property type="chains" value="A=71-361"/>
</dbReference>
<dbReference type="PDB" id="2EUT">
    <property type="method" value="X-ray"/>
    <property type="resolution" value="1.12 A"/>
    <property type="chains" value="A=71-361"/>
</dbReference>
<dbReference type="PDB" id="2EUU">
    <property type="method" value="X-ray"/>
    <property type="resolution" value="1.45 A"/>
    <property type="chains" value="A=71-361"/>
</dbReference>
<dbReference type="PDB" id="2GB8">
    <property type="method" value="NMR"/>
    <property type="chains" value="A=68-361"/>
</dbReference>
<dbReference type="PDB" id="2IA8">
    <property type="method" value="X-ray"/>
    <property type="resolution" value="1.48 A"/>
    <property type="chains" value="A=71-361"/>
</dbReference>
<dbReference type="PDB" id="2ICV">
    <property type="method" value="X-ray"/>
    <property type="resolution" value="1.60 A"/>
    <property type="chains" value="A=71-361"/>
</dbReference>
<dbReference type="PDB" id="2JTI">
    <property type="method" value="NMR"/>
    <property type="chains" value="A=68-361"/>
</dbReference>
<dbReference type="PDB" id="2N18">
    <property type="method" value="NMR"/>
    <property type="chains" value="A=68-361"/>
</dbReference>
<dbReference type="PDB" id="2PCB">
    <property type="method" value="X-ray"/>
    <property type="resolution" value="2.80 A"/>
    <property type="chains" value="A/C=68-361"/>
</dbReference>
<dbReference type="PDB" id="2PCC">
    <property type="method" value="X-ray"/>
    <property type="resolution" value="2.30 A"/>
    <property type="chains" value="A/C=68-361"/>
</dbReference>
<dbReference type="PDB" id="2RBT">
    <property type="method" value="X-ray"/>
    <property type="resolution" value="1.24 A"/>
    <property type="chains" value="X=71-361"/>
</dbReference>
<dbReference type="PDB" id="2RBU">
    <property type="method" value="X-ray"/>
    <property type="resolution" value="1.80 A"/>
    <property type="chains" value="X=71-361"/>
</dbReference>
<dbReference type="PDB" id="2RBV">
    <property type="method" value="X-ray"/>
    <property type="resolution" value="1.39 A"/>
    <property type="chains" value="X=71-361"/>
</dbReference>
<dbReference type="PDB" id="2RBW">
    <property type="method" value="X-ray"/>
    <property type="resolution" value="1.50 A"/>
    <property type="chains" value="X=71-361"/>
</dbReference>
<dbReference type="PDB" id="2RBX">
    <property type="method" value="X-ray"/>
    <property type="resolution" value="1.50 A"/>
    <property type="chains" value="X=71-361"/>
</dbReference>
<dbReference type="PDB" id="2RBY">
    <property type="method" value="X-ray"/>
    <property type="resolution" value="1.50 A"/>
    <property type="chains" value="X=71-361"/>
</dbReference>
<dbReference type="PDB" id="2RBZ">
    <property type="method" value="X-ray"/>
    <property type="resolution" value="1.80 A"/>
    <property type="chains" value="X=71-361"/>
</dbReference>
<dbReference type="PDB" id="2RC0">
    <property type="method" value="X-ray"/>
    <property type="resolution" value="1.50 A"/>
    <property type="chains" value="X=71-361"/>
</dbReference>
<dbReference type="PDB" id="2RC1">
    <property type="method" value="X-ray"/>
    <property type="resolution" value="2.49 A"/>
    <property type="chains" value="X=71-361"/>
</dbReference>
<dbReference type="PDB" id="2RC2">
    <property type="method" value="X-ray"/>
    <property type="resolution" value="1.50 A"/>
    <property type="chains" value="X=71-361"/>
</dbReference>
<dbReference type="PDB" id="2V23">
    <property type="method" value="X-ray"/>
    <property type="resolution" value="1.80 A"/>
    <property type="chains" value="A=68-361"/>
</dbReference>
<dbReference type="PDB" id="2V2E">
    <property type="method" value="X-ray"/>
    <property type="resolution" value="1.68 A"/>
    <property type="chains" value="A=71-361"/>
</dbReference>
<dbReference type="PDB" id="2X07">
    <property type="method" value="X-ray"/>
    <property type="resolution" value="1.86 A"/>
    <property type="chains" value="A=69-361"/>
</dbReference>
<dbReference type="PDB" id="2X08">
    <property type="method" value="X-ray"/>
    <property type="resolution" value="2.01 A"/>
    <property type="chains" value="A=69-361"/>
</dbReference>
<dbReference type="PDB" id="2XIL">
    <property type="method" value="X-ray"/>
    <property type="resolution" value="1.68 A"/>
    <property type="chains" value="A=71-361"/>
</dbReference>
<dbReference type="PDB" id="2XJ5">
    <property type="method" value="X-ray"/>
    <property type="resolution" value="1.69 A"/>
    <property type="chains" value="A=71-361"/>
</dbReference>
<dbReference type="PDB" id="2XJ8">
    <property type="method" value="X-ray"/>
    <property type="resolution" value="1.69 A"/>
    <property type="chains" value="A=71-361"/>
</dbReference>
<dbReference type="PDB" id="2Y5A">
    <property type="method" value="X-ray"/>
    <property type="resolution" value="1.25 A"/>
    <property type="chains" value="A=71-361"/>
</dbReference>
<dbReference type="PDB" id="2YCG">
    <property type="method" value="X-ray"/>
    <property type="resolution" value="1.81 A"/>
    <property type="chains" value="A=68-361"/>
</dbReference>
<dbReference type="PDB" id="3CCP">
    <property type="method" value="X-ray"/>
    <property type="resolution" value="2.20 A"/>
    <property type="chains" value="A=68-361"/>
</dbReference>
<dbReference type="PDB" id="3CCX">
    <property type="method" value="X-ray"/>
    <property type="resolution" value="2.30 A"/>
    <property type="chains" value="A=71-361"/>
</dbReference>
<dbReference type="PDB" id="3E2N">
    <property type="method" value="X-ray"/>
    <property type="resolution" value="1.30 A"/>
    <property type="chains" value="A=68-96, A=110-361"/>
</dbReference>
<dbReference type="PDB" id="3E2O">
    <property type="method" value="X-ray"/>
    <property type="resolution" value="1.06 A"/>
    <property type="chains" value="A=68-361"/>
</dbReference>
<dbReference type="PDB" id="3EXB">
    <property type="method" value="X-ray"/>
    <property type="resolution" value="1.60 A"/>
    <property type="chains" value="A=68-361"/>
</dbReference>
<dbReference type="PDB" id="3M23">
    <property type="method" value="X-ray"/>
    <property type="resolution" value="1.40 A"/>
    <property type="chains" value="A=71-361"/>
</dbReference>
<dbReference type="PDB" id="3M25">
    <property type="method" value="X-ray"/>
    <property type="resolution" value="1.40 A"/>
    <property type="chains" value="A=71-361"/>
</dbReference>
<dbReference type="PDB" id="3M26">
    <property type="method" value="X-ray"/>
    <property type="resolution" value="1.40 A"/>
    <property type="chains" value="A=71-361"/>
</dbReference>
<dbReference type="PDB" id="3M27">
    <property type="method" value="X-ray"/>
    <property type="resolution" value="1.40 A"/>
    <property type="chains" value="A=71-361"/>
</dbReference>
<dbReference type="PDB" id="3M28">
    <property type="method" value="X-ray"/>
    <property type="resolution" value="1.40 A"/>
    <property type="chains" value="A=71-361"/>
</dbReference>
<dbReference type="PDB" id="3M29">
    <property type="method" value="X-ray"/>
    <property type="resolution" value="1.40 A"/>
    <property type="chains" value="A=71-361"/>
</dbReference>
<dbReference type="PDB" id="3M2A">
    <property type="method" value="X-ray"/>
    <property type="resolution" value="1.40 A"/>
    <property type="chains" value="A=71-361"/>
</dbReference>
<dbReference type="PDB" id="3M2B">
    <property type="method" value="X-ray"/>
    <property type="resolution" value="1.40 A"/>
    <property type="chains" value="A=71-361"/>
</dbReference>
<dbReference type="PDB" id="3M2C">
    <property type="method" value="X-ray"/>
    <property type="resolution" value="1.40 A"/>
    <property type="chains" value="A=71-361"/>
</dbReference>
<dbReference type="PDB" id="3M2D">
    <property type="method" value="X-ray"/>
    <property type="resolution" value="1.40 A"/>
    <property type="chains" value="A=71-361"/>
</dbReference>
<dbReference type="PDB" id="3M2E">
    <property type="method" value="X-ray"/>
    <property type="resolution" value="1.40 A"/>
    <property type="chains" value="A=71-361"/>
</dbReference>
<dbReference type="PDB" id="3M2F">
    <property type="method" value="X-ray"/>
    <property type="resolution" value="1.40 A"/>
    <property type="chains" value="A=71-361"/>
</dbReference>
<dbReference type="PDB" id="3M2G">
    <property type="method" value="X-ray"/>
    <property type="resolution" value="1.40 A"/>
    <property type="chains" value="A=71-361"/>
</dbReference>
<dbReference type="PDB" id="3M2H">
    <property type="method" value="X-ray"/>
    <property type="resolution" value="1.40 A"/>
    <property type="chains" value="A=71-361"/>
</dbReference>
<dbReference type="PDB" id="3M2I">
    <property type="method" value="X-ray"/>
    <property type="resolution" value="1.40 A"/>
    <property type="chains" value="A=71-361"/>
</dbReference>
<dbReference type="PDB" id="3R98">
    <property type="method" value="Other"/>
    <property type="resolution" value="2.40 A"/>
    <property type="chains" value="A=69-361"/>
</dbReference>
<dbReference type="PDB" id="3R99">
    <property type="method" value="Other"/>
    <property type="resolution" value="2.40 A"/>
    <property type="chains" value="A=69-361"/>
</dbReference>
<dbReference type="PDB" id="4A6Z">
    <property type="method" value="X-ray"/>
    <property type="resolution" value="1.61 A"/>
    <property type="chains" value="A=68-361"/>
</dbReference>
<dbReference type="PDB" id="4A71">
    <property type="method" value="X-ray"/>
    <property type="resolution" value="1.61 A"/>
    <property type="chains" value="A=68-361"/>
</dbReference>
<dbReference type="PDB" id="4A78">
    <property type="method" value="X-ray"/>
    <property type="resolution" value="2.01 A"/>
    <property type="chains" value="A=68-361"/>
</dbReference>
<dbReference type="PDB" id="4A7M">
    <property type="method" value="X-ray"/>
    <property type="resolution" value="1.71 A"/>
    <property type="chains" value="A=68-361"/>
</dbReference>
<dbReference type="PDB" id="4CCP">
    <property type="method" value="X-ray"/>
    <property type="resolution" value="2.20 A"/>
    <property type="chains" value="A=68-361"/>
</dbReference>
<dbReference type="PDB" id="4CCX">
    <property type="method" value="X-ray"/>
    <property type="resolution" value="1.90 A"/>
    <property type="chains" value="A=71-361"/>
</dbReference>
<dbReference type="PDB" id="4CVI">
    <property type="method" value="Other"/>
    <property type="resolution" value="2.10 A"/>
    <property type="chains" value="A=70-361"/>
</dbReference>
<dbReference type="PDB" id="4CVJ">
    <property type="method" value="Other"/>
    <property type="resolution" value="2.18 A"/>
    <property type="chains" value="A=71-361"/>
</dbReference>
<dbReference type="PDB" id="4JB4">
    <property type="method" value="X-ray"/>
    <property type="resolution" value="2.39 A"/>
    <property type="chains" value="A/C=68-361"/>
</dbReference>
<dbReference type="PDB" id="4NFG">
    <property type="method" value="X-ray"/>
    <property type="resolution" value="2.11 A"/>
    <property type="chains" value="A=71-361"/>
</dbReference>
<dbReference type="PDB" id="4P4Q">
    <property type="method" value="X-ray"/>
    <property type="resolution" value="2.01 A"/>
    <property type="chains" value="A/C=68-361"/>
</dbReference>
<dbReference type="PDB" id="4XV4">
    <property type="method" value="X-ray"/>
    <property type="resolution" value="1.69 A"/>
    <property type="chains" value="A=71-361"/>
</dbReference>
<dbReference type="PDB" id="4XV5">
    <property type="method" value="X-ray"/>
    <property type="resolution" value="1.65 A"/>
    <property type="chains" value="A=71-361"/>
</dbReference>
<dbReference type="PDB" id="4XV6">
    <property type="method" value="X-ray"/>
    <property type="resolution" value="1.55 A"/>
    <property type="chains" value="A=71-361"/>
</dbReference>
<dbReference type="PDB" id="4XV7">
    <property type="method" value="X-ray"/>
    <property type="resolution" value="1.62 A"/>
    <property type="chains" value="A=71-361"/>
</dbReference>
<dbReference type="PDB" id="4XV8">
    <property type="method" value="X-ray"/>
    <property type="resolution" value="1.57 A"/>
    <property type="chains" value="A=71-361"/>
</dbReference>
<dbReference type="PDB" id="4XVA">
    <property type="method" value="X-ray"/>
    <property type="resolution" value="2.66 A"/>
    <property type="chains" value="A/C/E/G=69-361"/>
</dbReference>
<dbReference type="PDB" id="5CCP">
    <property type="method" value="X-ray"/>
    <property type="resolution" value="2.20 A"/>
    <property type="chains" value="A=68-361"/>
</dbReference>
<dbReference type="PDB" id="5CIB">
    <property type="method" value="X-ray"/>
    <property type="resolution" value="3.01 A"/>
    <property type="chains" value="A/C=68-361"/>
</dbReference>
<dbReference type="PDB" id="5CIC">
    <property type="method" value="X-ray"/>
    <property type="resolution" value="2.10 A"/>
    <property type="chains" value="A/C=68-361"/>
</dbReference>
<dbReference type="PDB" id="5CID">
    <property type="method" value="X-ray"/>
    <property type="resolution" value="2.76 A"/>
    <property type="chains" value="A/C=68-361"/>
</dbReference>
<dbReference type="PDB" id="5CIE">
    <property type="method" value="X-ray"/>
    <property type="resolution" value="2.60 A"/>
    <property type="chains" value="A/C=68-361"/>
</dbReference>
<dbReference type="PDB" id="5CIF">
    <property type="method" value="X-ray"/>
    <property type="resolution" value="2.01 A"/>
    <property type="chains" value="A/C=68-361"/>
</dbReference>
<dbReference type="PDB" id="5CIG">
    <property type="method" value="X-ray"/>
    <property type="resolution" value="2.06 A"/>
    <property type="chains" value="A/C=68-361"/>
</dbReference>
<dbReference type="PDB" id="5CIH">
    <property type="method" value="X-ray"/>
    <property type="resolution" value="2.60 A"/>
    <property type="chains" value="A/C=68-361"/>
</dbReference>
<dbReference type="PDB" id="5D6M">
    <property type="method" value="X-ray"/>
    <property type="resolution" value="1.65 A"/>
    <property type="chains" value="A=71-361"/>
</dbReference>
<dbReference type="PDB" id="5EJT">
    <property type="method" value="X-ray"/>
    <property type="resolution" value="1.55 A"/>
    <property type="chains" value="A=68-361"/>
</dbReference>
<dbReference type="PDB" id="5EJX">
    <property type="method" value="X-ray"/>
    <property type="resolution" value="1.50 A"/>
    <property type="chains" value="A=68-361"/>
</dbReference>
<dbReference type="PDB" id="6CCP">
    <property type="method" value="X-ray"/>
    <property type="resolution" value="2.20 A"/>
    <property type="chains" value="A=68-361"/>
</dbReference>
<dbReference type="PDB" id="6H08">
    <property type="method" value="X-ray"/>
    <property type="resolution" value="1.90 A"/>
    <property type="chains" value="A/B/C=71-361"/>
</dbReference>
<dbReference type="PDB" id="6P41">
    <property type="method" value="X-ray"/>
    <property type="resolution" value="2.90 A"/>
    <property type="chains" value="A/C=68-361"/>
</dbReference>
<dbReference type="PDB" id="6P42">
    <property type="method" value="X-ray"/>
    <property type="resolution" value="2.90 A"/>
    <property type="chains" value="A/C=68-361"/>
</dbReference>
<dbReference type="PDB" id="6P43">
    <property type="method" value="X-ray"/>
    <property type="resolution" value="1.91 A"/>
    <property type="chains" value="A/C=68-361"/>
</dbReference>
<dbReference type="PDB" id="6Y1T">
    <property type="method" value="X-ray"/>
    <property type="resolution" value="1.50 A"/>
    <property type="chains" value="A=71-361"/>
</dbReference>
<dbReference type="PDB" id="6Y2Y">
    <property type="method" value="X-ray"/>
    <property type="resolution" value="1.70 A"/>
    <property type="chains" value="A=71-361"/>
</dbReference>
<dbReference type="PDB" id="7BIU">
    <property type="method" value="X-ray"/>
    <property type="resolution" value="1.06 A"/>
    <property type="chains" value="A=70-361"/>
</dbReference>
<dbReference type="PDB" id="7CCP">
    <property type="method" value="X-ray"/>
    <property type="resolution" value="2.20 A"/>
    <property type="chains" value="A=68-361"/>
</dbReference>
<dbReference type="PDB" id="9C8L">
    <property type="method" value="X-ray"/>
    <property type="resolution" value="1.54 A"/>
    <property type="chains" value="A=68-361"/>
</dbReference>
<dbReference type="PDB" id="9C8M">
    <property type="method" value="X-ray"/>
    <property type="resolution" value="1.78 A"/>
    <property type="chains" value="A=68-361"/>
</dbReference>
<dbReference type="PDB" id="9C8O">
    <property type="method" value="X-ray"/>
    <property type="resolution" value="2.31 A"/>
    <property type="chains" value="A=68-361"/>
</dbReference>
<dbReference type="PDB" id="9C8P">
    <property type="method" value="X-ray"/>
    <property type="resolution" value="2.31 A"/>
    <property type="chains" value="A=68-361"/>
</dbReference>
<dbReference type="PDBsum" id="1A2F"/>
<dbReference type="PDBsum" id="1A2G"/>
<dbReference type="PDBsum" id="1AA4"/>
<dbReference type="PDBsum" id="1AC4"/>
<dbReference type="PDBsum" id="1AC8"/>
<dbReference type="PDBsum" id="1AEB"/>
<dbReference type="PDBsum" id="1AED"/>
<dbReference type="PDBsum" id="1AEE"/>
<dbReference type="PDBsum" id="1AEF"/>
<dbReference type="PDBsum" id="1AEG"/>
<dbReference type="PDBsum" id="1AEH"/>
<dbReference type="PDBsum" id="1AEJ"/>
<dbReference type="PDBsum" id="1AEK"/>
<dbReference type="PDBsum" id="1AEM"/>
<dbReference type="PDBsum" id="1AEN"/>
<dbReference type="PDBsum" id="1AEO"/>
<dbReference type="PDBsum" id="1AEQ"/>
<dbReference type="PDBsum" id="1AES"/>
<dbReference type="PDBsum" id="1AET"/>
<dbReference type="PDBsum" id="1AEU"/>
<dbReference type="PDBsum" id="1AEV"/>
<dbReference type="PDBsum" id="1BEJ"/>
<dbReference type="PDBsum" id="1BEK"/>
<dbReference type="PDBsum" id="1BEM"/>
<dbReference type="PDBsum" id="1BEP"/>
<dbReference type="PDBsum" id="1BEQ"/>
<dbReference type="PDBsum" id="1BES"/>
<dbReference type="PDBsum" id="1BJ9"/>
<dbReference type="PDBsum" id="1BVA"/>
<dbReference type="PDBsum" id="1CCA"/>
<dbReference type="PDBsum" id="1CCB"/>
<dbReference type="PDBsum" id="1CCC"/>
<dbReference type="PDBsum" id="1CCE"/>
<dbReference type="PDBsum" id="1CCG"/>
<dbReference type="PDBsum" id="1CCI"/>
<dbReference type="PDBsum" id="1CCJ"/>
<dbReference type="PDBsum" id="1CCK"/>
<dbReference type="PDBsum" id="1CCL"/>
<dbReference type="PDBsum" id="1CCP"/>
<dbReference type="PDBsum" id="1CMP"/>
<dbReference type="PDBsum" id="1CMQ"/>
<dbReference type="PDBsum" id="1CMT"/>
<dbReference type="PDBsum" id="1CMU"/>
<dbReference type="PDBsum" id="1CPD"/>
<dbReference type="PDBsum" id="1CPE"/>
<dbReference type="PDBsum" id="1CPF"/>
<dbReference type="PDBsum" id="1CPG"/>
<dbReference type="PDBsum" id="1CYF"/>
<dbReference type="PDBsum" id="1DCC"/>
<dbReference type="PDBsum" id="1DJ1"/>
<dbReference type="PDBsum" id="1DJ5"/>
<dbReference type="PDBsum" id="1DS4"/>
<dbReference type="PDBsum" id="1DSE"/>
<dbReference type="PDBsum" id="1DSG"/>
<dbReference type="PDBsum" id="1DSO"/>
<dbReference type="PDBsum" id="1DSP"/>
<dbReference type="PDBsum" id="1EBE"/>
<dbReference type="PDBsum" id="1JCI"/>
<dbReference type="PDBsum" id="1JDR"/>
<dbReference type="PDBsum" id="1KOK"/>
<dbReference type="PDBsum" id="1KRJ"/>
<dbReference type="PDBsum" id="1KXM"/>
<dbReference type="PDBsum" id="1KXN"/>
<dbReference type="PDBsum" id="1MK8"/>
<dbReference type="PDBsum" id="1MKQ"/>
<dbReference type="PDBsum" id="1MKR"/>
<dbReference type="PDBsum" id="1ML2"/>
<dbReference type="PDBsum" id="1RYC"/>
<dbReference type="PDBsum" id="1S6V"/>
<dbReference type="PDBsum" id="1S73"/>
<dbReference type="PDBsum" id="1SBM"/>
<dbReference type="PDBsum" id="1SDQ"/>
<dbReference type="PDBsum" id="1SOG"/>
<dbReference type="PDBsum" id="1STQ"/>
<dbReference type="PDBsum" id="1U74"/>
<dbReference type="PDBsum" id="1U75"/>
<dbReference type="PDBsum" id="1Z53"/>
<dbReference type="PDBsum" id="1ZBY"/>
<dbReference type="PDBsum" id="1ZBZ"/>
<dbReference type="PDBsum" id="2ANZ"/>
<dbReference type="PDBsum" id="2AQD"/>
<dbReference type="PDBsum" id="2AS1"/>
<dbReference type="PDBsum" id="2AS2"/>
<dbReference type="PDBsum" id="2AS3"/>
<dbReference type="PDBsum" id="2AS4"/>
<dbReference type="PDBsum" id="2AS6"/>
<dbReference type="PDBsum" id="2B0Z"/>
<dbReference type="PDBsum" id="2B10"/>
<dbReference type="PDBsum" id="2B11"/>
<dbReference type="PDBsum" id="2B12"/>
<dbReference type="PDBsum" id="2BCN"/>
<dbReference type="PDBsum" id="2CCP"/>
<dbReference type="PDBsum" id="2CEP"/>
<dbReference type="PDBsum" id="2CYP"/>
<dbReference type="PDBsum" id="2EUN"/>
<dbReference type="PDBsum" id="2EUO"/>
<dbReference type="PDBsum" id="2EUP"/>
<dbReference type="PDBsum" id="2EUQ"/>
<dbReference type="PDBsum" id="2EUR"/>
<dbReference type="PDBsum" id="2EUS"/>
<dbReference type="PDBsum" id="2EUT"/>
<dbReference type="PDBsum" id="2EUU"/>
<dbReference type="PDBsum" id="2GB8"/>
<dbReference type="PDBsum" id="2IA8"/>
<dbReference type="PDBsum" id="2ICV"/>
<dbReference type="PDBsum" id="2JTI"/>
<dbReference type="PDBsum" id="2N18"/>
<dbReference type="PDBsum" id="2PCB"/>
<dbReference type="PDBsum" id="2PCC"/>
<dbReference type="PDBsum" id="2RBT"/>
<dbReference type="PDBsum" id="2RBU"/>
<dbReference type="PDBsum" id="2RBV"/>
<dbReference type="PDBsum" id="2RBW"/>
<dbReference type="PDBsum" id="2RBX"/>
<dbReference type="PDBsum" id="2RBY"/>
<dbReference type="PDBsum" id="2RBZ"/>
<dbReference type="PDBsum" id="2RC0"/>
<dbReference type="PDBsum" id="2RC1"/>
<dbReference type="PDBsum" id="2RC2"/>
<dbReference type="PDBsum" id="2V23"/>
<dbReference type="PDBsum" id="2V2E"/>
<dbReference type="PDBsum" id="2X07"/>
<dbReference type="PDBsum" id="2X08"/>
<dbReference type="PDBsum" id="2XIL"/>
<dbReference type="PDBsum" id="2XJ5"/>
<dbReference type="PDBsum" id="2XJ8"/>
<dbReference type="PDBsum" id="2Y5A"/>
<dbReference type="PDBsum" id="2YCG"/>
<dbReference type="PDBsum" id="3CCP"/>
<dbReference type="PDBsum" id="3CCX"/>
<dbReference type="PDBsum" id="3E2N"/>
<dbReference type="PDBsum" id="3E2O"/>
<dbReference type="PDBsum" id="3EXB"/>
<dbReference type="PDBsum" id="3M23"/>
<dbReference type="PDBsum" id="3M25"/>
<dbReference type="PDBsum" id="3M26"/>
<dbReference type="PDBsum" id="3M27"/>
<dbReference type="PDBsum" id="3M28"/>
<dbReference type="PDBsum" id="3M29"/>
<dbReference type="PDBsum" id="3M2A"/>
<dbReference type="PDBsum" id="3M2B"/>
<dbReference type="PDBsum" id="3M2C"/>
<dbReference type="PDBsum" id="3M2D"/>
<dbReference type="PDBsum" id="3M2E"/>
<dbReference type="PDBsum" id="3M2F"/>
<dbReference type="PDBsum" id="3M2G"/>
<dbReference type="PDBsum" id="3M2H"/>
<dbReference type="PDBsum" id="3M2I"/>
<dbReference type="PDBsum" id="3R98"/>
<dbReference type="PDBsum" id="3R99"/>
<dbReference type="PDBsum" id="4A6Z"/>
<dbReference type="PDBsum" id="4A71"/>
<dbReference type="PDBsum" id="4A78"/>
<dbReference type="PDBsum" id="4A7M"/>
<dbReference type="PDBsum" id="4CCP"/>
<dbReference type="PDBsum" id="4CCX"/>
<dbReference type="PDBsum" id="4CVI"/>
<dbReference type="PDBsum" id="4CVJ"/>
<dbReference type="PDBsum" id="4JB4"/>
<dbReference type="PDBsum" id="4NFG"/>
<dbReference type="PDBsum" id="4P4Q"/>
<dbReference type="PDBsum" id="4XV4"/>
<dbReference type="PDBsum" id="4XV5"/>
<dbReference type="PDBsum" id="4XV6"/>
<dbReference type="PDBsum" id="4XV7"/>
<dbReference type="PDBsum" id="4XV8"/>
<dbReference type="PDBsum" id="4XVA"/>
<dbReference type="PDBsum" id="5CCP"/>
<dbReference type="PDBsum" id="5CIB"/>
<dbReference type="PDBsum" id="5CIC"/>
<dbReference type="PDBsum" id="5CID"/>
<dbReference type="PDBsum" id="5CIE"/>
<dbReference type="PDBsum" id="5CIF"/>
<dbReference type="PDBsum" id="5CIG"/>
<dbReference type="PDBsum" id="5CIH"/>
<dbReference type="PDBsum" id="5D6M"/>
<dbReference type="PDBsum" id="5EJT"/>
<dbReference type="PDBsum" id="5EJX"/>
<dbReference type="PDBsum" id="6CCP"/>
<dbReference type="PDBsum" id="6H08"/>
<dbReference type="PDBsum" id="6P41"/>
<dbReference type="PDBsum" id="6P42"/>
<dbReference type="PDBsum" id="6P43"/>
<dbReference type="PDBsum" id="6Y1T"/>
<dbReference type="PDBsum" id="6Y2Y"/>
<dbReference type="PDBsum" id="7BIU"/>
<dbReference type="PDBsum" id="7CCP"/>
<dbReference type="PDBsum" id="9C8L"/>
<dbReference type="PDBsum" id="9C8M"/>
<dbReference type="PDBsum" id="9C8O"/>
<dbReference type="PDBsum" id="9C8P"/>
<dbReference type="BMRB" id="P00431"/>
<dbReference type="SMR" id="P00431"/>
<dbReference type="BioGRID" id="34197">
    <property type="interactions" value="140"/>
</dbReference>
<dbReference type="DIP" id="DIP-6251N"/>
<dbReference type="FunCoup" id="P00431">
    <property type="interactions" value="116"/>
</dbReference>
<dbReference type="IntAct" id="P00431">
    <property type="interactions" value="70"/>
</dbReference>
<dbReference type="MINT" id="P00431"/>
<dbReference type="STRING" id="4932.YKR066C"/>
<dbReference type="PeroxiBase" id="2361">
    <property type="entry name" value="SceCcP01"/>
</dbReference>
<dbReference type="iPTMnet" id="P00431"/>
<dbReference type="PaxDb" id="4932-YKR066C"/>
<dbReference type="PeptideAtlas" id="P00431"/>
<dbReference type="EnsemblFungi" id="YKR066C_mRNA">
    <property type="protein sequence ID" value="YKR066C"/>
    <property type="gene ID" value="YKR066C"/>
</dbReference>
<dbReference type="GeneID" id="853940"/>
<dbReference type="KEGG" id="sce:YKR066C"/>
<dbReference type="AGR" id="SGD:S000001774"/>
<dbReference type="SGD" id="S000001774">
    <property type="gene designation" value="CCP1"/>
</dbReference>
<dbReference type="VEuPathDB" id="FungiDB:YKR066C"/>
<dbReference type="eggNOG" id="ENOG502QR1E">
    <property type="taxonomic scope" value="Eukaryota"/>
</dbReference>
<dbReference type="HOGENOM" id="CLU_036959_1_1_1"/>
<dbReference type="InParanoid" id="P00431"/>
<dbReference type="OMA" id="QRKWNGP"/>
<dbReference type="OrthoDB" id="2859658at2759"/>
<dbReference type="BioCyc" id="YEAST:YKR066C-MONOMER"/>
<dbReference type="BRENDA" id="1.11.1.5">
    <property type="organism ID" value="984"/>
</dbReference>
<dbReference type="SABIO-RK" id="P00431"/>
<dbReference type="BioGRID-ORCS" id="853940">
    <property type="hits" value="7 hits in 10 CRISPR screens"/>
</dbReference>
<dbReference type="EvolutionaryTrace" id="P00431"/>
<dbReference type="PRO" id="PR:P00431"/>
<dbReference type="Proteomes" id="UP000002311">
    <property type="component" value="Chromosome XI"/>
</dbReference>
<dbReference type="RNAct" id="P00431">
    <property type="molecule type" value="protein"/>
</dbReference>
<dbReference type="GO" id="GO:0005758">
    <property type="term" value="C:mitochondrial intermembrane space"/>
    <property type="evidence" value="ECO:0000314"/>
    <property type="project" value="SGD"/>
</dbReference>
<dbReference type="GO" id="GO:0005759">
    <property type="term" value="C:mitochondrial matrix"/>
    <property type="evidence" value="ECO:0007669"/>
    <property type="project" value="UniProtKB-SubCell"/>
</dbReference>
<dbReference type="GO" id="GO:0005739">
    <property type="term" value="C:mitochondrion"/>
    <property type="evidence" value="ECO:0007005"/>
    <property type="project" value="SGD"/>
</dbReference>
<dbReference type="GO" id="GO:0004130">
    <property type="term" value="F:cytochrome-c peroxidase activity"/>
    <property type="evidence" value="ECO:0000314"/>
    <property type="project" value="UniProtKB"/>
</dbReference>
<dbReference type="GO" id="GO:0020037">
    <property type="term" value="F:heme binding"/>
    <property type="evidence" value="ECO:0007669"/>
    <property type="project" value="InterPro"/>
</dbReference>
<dbReference type="GO" id="GO:0046872">
    <property type="term" value="F:metal ion binding"/>
    <property type="evidence" value="ECO:0007669"/>
    <property type="project" value="UniProtKB-KW"/>
</dbReference>
<dbReference type="GO" id="GO:0004601">
    <property type="term" value="F:peroxidase activity"/>
    <property type="evidence" value="ECO:0000318"/>
    <property type="project" value="GO_Central"/>
</dbReference>
<dbReference type="GO" id="GO:0034599">
    <property type="term" value="P:cellular response to oxidative stress"/>
    <property type="evidence" value="ECO:0000315"/>
    <property type="project" value="SGD"/>
</dbReference>
<dbReference type="GO" id="GO:0042744">
    <property type="term" value="P:hydrogen peroxide catabolic process"/>
    <property type="evidence" value="ECO:0000318"/>
    <property type="project" value="GO_Central"/>
</dbReference>
<dbReference type="GO" id="GO:0000302">
    <property type="term" value="P:response to reactive oxygen species"/>
    <property type="evidence" value="ECO:0000318"/>
    <property type="project" value="GO_Central"/>
</dbReference>
<dbReference type="CDD" id="cd00691">
    <property type="entry name" value="ascorbate_peroxidase"/>
    <property type="match status" value="1"/>
</dbReference>
<dbReference type="FunFam" id="1.10.520.10:FF:000005">
    <property type="entry name" value="Cytochrome c peroxidase"/>
    <property type="match status" value="1"/>
</dbReference>
<dbReference type="FunFam" id="1.10.420.10:FF:000015">
    <property type="entry name" value="Cytochrome c peroxidase, mitochondrial"/>
    <property type="match status" value="1"/>
</dbReference>
<dbReference type="Gene3D" id="1.10.520.10">
    <property type="match status" value="1"/>
</dbReference>
<dbReference type="Gene3D" id="1.10.420.10">
    <property type="entry name" value="Peroxidase, domain 2"/>
    <property type="match status" value="1"/>
</dbReference>
<dbReference type="InterPro" id="IPR044831">
    <property type="entry name" value="Ccp1-like"/>
</dbReference>
<dbReference type="InterPro" id="IPR002016">
    <property type="entry name" value="Haem_peroxidase"/>
</dbReference>
<dbReference type="InterPro" id="IPR010255">
    <property type="entry name" value="Haem_peroxidase_sf"/>
</dbReference>
<dbReference type="InterPro" id="IPR002207">
    <property type="entry name" value="Peroxidase_I"/>
</dbReference>
<dbReference type="InterPro" id="IPR019794">
    <property type="entry name" value="Peroxidases_AS"/>
</dbReference>
<dbReference type="InterPro" id="IPR019793">
    <property type="entry name" value="Peroxidases_heam-ligand_BS"/>
</dbReference>
<dbReference type="PANTHER" id="PTHR31356:SF58">
    <property type="entry name" value="CYTOCHROME C PEROXIDASE, MITOCHONDRIAL"/>
    <property type="match status" value="1"/>
</dbReference>
<dbReference type="PANTHER" id="PTHR31356">
    <property type="entry name" value="THYLAKOID LUMENAL 29 KDA PROTEIN, CHLOROPLASTIC-RELATED"/>
    <property type="match status" value="1"/>
</dbReference>
<dbReference type="Pfam" id="PF00141">
    <property type="entry name" value="peroxidase"/>
    <property type="match status" value="1"/>
</dbReference>
<dbReference type="PRINTS" id="PR00459">
    <property type="entry name" value="ASPEROXIDASE"/>
</dbReference>
<dbReference type="PRINTS" id="PR00458">
    <property type="entry name" value="PEROXIDASE"/>
</dbReference>
<dbReference type="SUPFAM" id="SSF48113">
    <property type="entry name" value="Heme-dependent peroxidases"/>
    <property type="match status" value="1"/>
</dbReference>
<dbReference type="PROSITE" id="PS00435">
    <property type="entry name" value="PEROXIDASE_1"/>
    <property type="match status" value="1"/>
</dbReference>
<dbReference type="PROSITE" id="PS00436">
    <property type="entry name" value="PEROXIDASE_2"/>
    <property type="match status" value="1"/>
</dbReference>
<dbReference type="PROSITE" id="PS50873">
    <property type="entry name" value="PEROXIDASE_4"/>
    <property type="match status" value="1"/>
</dbReference>
<accession>P00431</accession>
<accession>D6VXC7</accession>
<accession>Q6Q5M9</accession>
<sequence length="361" mass="40353">MTTAVRLLPSLGRTAHKRSLYLFSAAAAAAAAATFAYSQSQKRSSSSPGGGSNHGWNNWGKAAALASTTPLVHVASVEKGRSYEDFQKVYNAIALKLREDDEYDNYIGYGPVLVRLAWHTSGTWDKHDNTGGSYGGTYRFKKEFNDPSNAGLQNGFKFLEPIHKEFPWISSGDLFSLGGVTAVQEMQGPKIPWRCGRVDTPEDTTPDNGRLPDADKDADYVRTFFQRLNMNDREVVALMGAHALGKTHLKNSGYEGPWGAANNVFTNEFYLNLLNEDWKLEKNDANNEQWDSKSGYMMLPTDYSLIQDPKYLSIVKEYANDQDKFFKDFSKAFEKLLENGITFPKDAPSPFIFKTLEEQGL</sequence>
<evidence type="ECO:0000269" key="1">
    <source>
    </source>
</evidence>
<evidence type="ECO:0000269" key="2">
    <source>
    </source>
</evidence>
<evidence type="ECO:0000269" key="3">
    <source>
    </source>
</evidence>
<evidence type="ECO:0000269" key="4">
    <source>
    </source>
</evidence>
<evidence type="ECO:0000269" key="5">
    <source>
    </source>
</evidence>
<evidence type="ECO:0000269" key="6">
    <source>
    </source>
</evidence>
<evidence type="ECO:0000269" key="7">
    <source>
    </source>
</evidence>
<evidence type="ECO:0000269" key="8">
    <source>
    </source>
</evidence>
<evidence type="ECO:0000269" key="9">
    <source>
    </source>
</evidence>
<evidence type="ECO:0000269" key="10">
    <source>
    </source>
</evidence>
<evidence type="ECO:0000269" key="11">
    <source>
    </source>
</evidence>
<evidence type="ECO:0000269" key="12">
    <source>
    </source>
</evidence>
<evidence type="ECO:0000305" key="13"/>
<evidence type="ECO:0007744" key="14">
    <source>
    </source>
</evidence>
<evidence type="ECO:0007829" key="15">
    <source>
        <dbReference type="PDB" id="1CMT"/>
    </source>
</evidence>
<evidence type="ECO:0007829" key="16">
    <source>
        <dbReference type="PDB" id="1MKR"/>
    </source>
</evidence>
<evidence type="ECO:0007829" key="17">
    <source>
        <dbReference type="PDB" id="2B0Z"/>
    </source>
</evidence>
<evidence type="ECO:0007829" key="18">
    <source>
        <dbReference type="PDB" id="2BCN"/>
    </source>
</evidence>
<evidence type="ECO:0007829" key="19">
    <source>
        <dbReference type="PDB" id="2IA8"/>
    </source>
</evidence>
<evidence type="ECO:0007829" key="20">
    <source>
        <dbReference type="PDB" id="2PCC"/>
    </source>
</evidence>
<evidence type="ECO:0007829" key="21">
    <source>
        <dbReference type="PDB" id="3E2O"/>
    </source>
</evidence>
<evidence type="ECO:0007829" key="22">
    <source>
        <dbReference type="PDB" id="3M23"/>
    </source>
</evidence>
<comment type="function">
    <text evidence="8">Destroys radicals which are normally produced within the cells and which are toxic to biological systems.</text>
</comment>
<comment type="catalytic activity">
    <reaction evidence="8">
        <text>2 Fe(II)-[cytochrome c] + H2O2 + 2 H(+) = 2 Fe(III)-[cytochrome c] + 2 H2O</text>
        <dbReference type="Rhea" id="RHEA:16581"/>
        <dbReference type="Rhea" id="RHEA-COMP:10350"/>
        <dbReference type="Rhea" id="RHEA-COMP:14399"/>
        <dbReference type="ChEBI" id="CHEBI:15377"/>
        <dbReference type="ChEBI" id="CHEBI:15378"/>
        <dbReference type="ChEBI" id="CHEBI:16240"/>
        <dbReference type="ChEBI" id="CHEBI:29033"/>
        <dbReference type="ChEBI" id="CHEBI:29034"/>
        <dbReference type="EC" id="1.11.1.5"/>
    </reaction>
</comment>
<comment type="cofactor">
    <cofactor evidence="1 2 6 9 11 12">
        <name>heme b</name>
        <dbReference type="ChEBI" id="CHEBI:60344"/>
    </cofactor>
    <text evidence="1 2 6 9 11 12">Binds 1 heme b (iron(II)-protoporphyrin IX) group per subunit.</text>
</comment>
<comment type="subunit">
    <text evidence="8">Forms a one-to-one complex with cytochrome c.</text>
</comment>
<comment type="interaction">
    <interactant intactId="EBI-4389">
        <id>P00431</id>
    </interactant>
    <interactant intactId="EBI-5393">
        <id>P00044</id>
        <label>CYC1</label>
    </interactant>
    <organismsDiffer>false</organismsDiffer>
    <experiments>4</experiments>
</comment>
<comment type="subcellular location">
    <subcellularLocation>
        <location>Mitochondrion matrix</location>
    </subcellularLocation>
    <subcellularLocation>
        <location evidence="7">Mitochondrion intermembrane space</location>
    </subcellularLocation>
</comment>
<comment type="PTM">
    <text evidence="3 5">CCP1 precursor is processed by the rhomboid protease PCP1, which cleaves the N-terminal hydrophobic transit peptide (PubMed:12774122, PubMed:17245427). The m-AAA protease (composed of YTA12/RCA1 and YTA10/AFG3) is required for CCP1 maturation: m-AAA protease promotes membrane dislocation of the CCP1 transmembrane segment within the transit peptide to ensure the correct positioning of CCP1 within the membrane bilayer, allowing intramembrane cleavage by PCP1 (PubMed:17245427).</text>
</comment>
<comment type="miscellaneous">
    <text evidence="4">Present with 6730 molecules/cell in log phase SD medium.</text>
</comment>
<comment type="similarity">
    <text evidence="13">Belongs to the peroxidase family. Cytochrome c peroxidase subfamily.</text>
</comment>